<feature type="chain" id="PRO_0000127749" description="Small ribosomal subunit protein RACK1">
    <location>
        <begin position="1"/>
        <end position="327"/>
    </location>
</feature>
<feature type="repeat" description="WD 1">
    <location>
        <begin position="13"/>
        <end position="44"/>
    </location>
</feature>
<feature type="repeat" description="WD 2">
    <location>
        <begin position="61"/>
        <end position="91"/>
    </location>
</feature>
<feature type="repeat" description="WD 3">
    <location>
        <begin position="103"/>
        <end position="133"/>
    </location>
</feature>
<feature type="repeat" description="WD 4">
    <location>
        <begin position="148"/>
        <end position="180"/>
    </location>
</feature>
<feature type="repeat" description="WD 5">
    <location>
        <begin position="192"/>
        <end position="222"/>
    </location>
</feature>
<feature type="repeat" description="WD 6">
    <location>
        <begin position="233"/>
        <end position="262"/>
    </location>
</feature>
<feature type="repeat" description="WD 7">
    <location>
        <begin position="293"/>
        <end position="323"/>
    </location>
</feature>
<sequence>MAEGLVLKGTMRAHTDMVTAIATPIDNSDTIVSASRDKSIIVWKLTKDDKSYGVRQRRLTGHSHFVEDVVLSSDGQFALSGSWDGELRLWDLAAGVSTRRFVGHTKDVLSVAFSLDNRQIVSASRDRTIKLWNTLGECKYTISEGGEGHRDWVSCVRFSPNTLQPTIVSASCDKTVKVWNLSNCKLRSTLAGHTGYVSTVAVSPDGSLCASGGKDGVVLLWDLAEGKKLYSLEANSVIHALCFTPNRYWLCAATEQGIKIWDLESKTVVEDLKVDLKAEAEKSDGSGTAATKRKVIYCTSLNWSADGSTLFSGYTDGVIRVWGIGRY</sequence>
<gene>
    <name type="primary">GB1</name>
</gene>
<proteinExistence type="evidence at transcript level"/>
<evidence type="ECO:0000305" key="1"/>
<comment type="similarity">
    <text evidence="1">Belongs to the WD repeat G protein beta family. Ribosomal protein RACK1 subfamily.</text>
</comment>
<reference key="1">
    <citation type="submission" date="1994-11" db="EMBL/GenBank/DDBJ databases">
        <authorList>
            <person name="Kwak J."/>
            <person name="Kim S."/>
            <person name="Byoun C."/>
            <person name="Nam H."/>
        </authorList>
    </citation>
    <scope>NUCLEOTIDE SEQUENCE [MRNA]</scope>
    <source>
        <strain>cv. Naehan</strain>
        <tissue>Root</tissue>
    </source>
</reference>
<accession>Q39336</accession>
<keyword id="KW-0677">Repeat</keyword>
<keyword id="KW-0687">Ribonucleoprotein</keyword>
<keyword id="KW-0689">Ribosomal protein</keyword>
<keyword id="KW-0853">WD repeat</keyword>
<protein>
    <recommendedName>
        <fullName evidence="1">Small ribosomal subunit protein RACK1</fullName>
    </recommendedName>
    <alternativeName>
        <fullName>Guanine nucleotide-binding protein subunit beta-like protein</fullName>
    </alternativeName>
</protein>
<dbReference type="EMBL" id="Z33643">
    <property type="protein sequence ID" value="CAA83924.1"/>
    <property type="molecule type" value="mRNA"/>
</dbReference>
<dbReference type="PIR" id="S48839">
    <property type="entry name" value="S48839"/>
</dbReference>
<dbReference type="SMR" id="Q39336"/>
<dbReference type="GO" id="GO:1990904">
    <property type="term" value="C:ribonucleoprotein complex"/>
    <property type="evidence" value="ECO:0007669"/>
    <property type="project" value="UniProtKB-KW"/>
</dbReference>
<dbReference type="GO" id="GO:0005840">
    <property type="term" value="C:ribosome"/>
    <property type="evidence" value="ECO:0007669"/>
    <property type="project" value="UniProtKB-KW"/>
</dbReference>
<dbReference type="GO" id="GO:0043022">
    <property type="term" value="F:ribosome binding"/>
    <property type="evidence" value="ECO:0007669"/>
    <property type="project" value="InterPro"/>
</dbReference>
<dbReference type="GO" id="GO:0045182">
    <property type="term" value="F:translation regulator activity"/>
    <property type="evidence" value="ECO:0007669"/>
    <property type="project" value="InterPro"/>
</dbReference>
<dbReference type="CDD" id="cd00200">
    <property type="entry name" value="WD40"/>
    <property type="match status" value="1"/>
</dbReference>
<dbReference type="FunFam" id="2.130.10.10:FF:000018">
    <property type="entry name" value="Receptor for activated C kinase 1"/>
    <property type="match status" value="1"/>
</dbReference>
<dbReference type="Gene3D" id="2.130.10.10">
    <property type="entry name" value="YVTN repeat-like/Quinoprotein amine dehydrogenase"/>
    <property type="match status" value="1"/>
</dbReference>
<dbReference type="InterPro" id="IPR020472">
    <property type="entry name" value="G-protein_beta_WD-40_rep"/>
</dbReference>
<dbReference type="InterPro" id="IPR045223">
    <property type="entry name" value="RACK1-like"/>
</dbReference>
<dbReference type="InterPro" id="IPR015943">
    <property type="entry name" value="WD40/YVTN_repeat-like_dom_sf"/>
</dbReference>
<dbReference type="InterPro" id="IPR019775">
    <property type="entry name" value="WD40_repeat_CS"/>
</dbReference>
<dbReference type="InterPro" id="IPR036322">
    <property type="entry name" value="WD40_repeat_dom_sf"/>
</dbReference>
<dbReference type="InterPro" id="IPR001680">
    <property type="entry name" value="WD40_rpt"/>
</dbReference>
<dbReference type="PANTHER" id="PTHR19868">
    <property type="entry name" value="RECEPTOR FOR ACTIVATED PROTEIN KINASE C RACK1"/>
    <property type="match status" value="1"/>
</dbReference>
<dbReference type="Pfam" id="PF00400">
    <property type="entry name" value="WD40"/>
    <property type="match status" value="7"/>
</dbReference>
<dbReference type="PRINTS" id="PR00320">
    <property type="entry name" value="GPROTEINBRPT"/>
</dbReference>
<dbReference type="SMART" id="SM00320">
    <property type="entry name" value="WD40"/>
    <property type="match status" value="7"/>
</dbReference>
<dbReference type="SUPFAM" id="SSF50978">
    <property type="entry name" value="WD40 repeat-like"/>
    <property type="match status" value="1"/>
</dbReference>
<dbReference type="PROSITE" id="PS00678">
    <property type="entry name" value="WD_REPEATS_1"/>
    <property type="match status" value="4"/>
</dbReference>
<dbReference type="PROSITE" id="PS50082">
    <property type="entry name" value="WD_REPEATS_2"/>
    <property type="match status" value="6"/>
</dbReference>
<dbReference type="PROSITE" id="PS50294">
    <property type="entry name" value="WD_REPEATS_REGION"/>
    <property type="match status" value="1"/>
</dbReference>
<name>GBLP_BRANA</name>
<organism>
    <name type="scientific">Brassica napus</name>
    <name type="common">Rape</name>
    <dbReference type="NCBI Taxonomy" id="3708"/>
    <lineage>
        <taxon>Eukaryota</taxon>
        <taxon>Viridiplantae</taxon>
        <taxon>Streptophyta</taxon>
        <taxon>Embryophyta</taxon>
        <taxon>Tracheophyta</taxon>
        <taxon>Spermatophyta</taxon>
        <taxon>Magnoliopsida</taxon>
        <taxon>eudicotyledons</taxon>
        <taxon>Gunneridae</taxon>
        <taxon>Pentapetalae</taxon>
        <taxon>rosids</taxon>
        <taxon>malvids</taxon>
        <taxon>Brassicales</taxon>
        <taxon>Brassicaceae</taxon>
        <taxon>Brassiceae</taxon>
        <taxon>Brassica</taxon>
    </lineage>
</organism>